<dbReference type="EC" id="4.3.3.6" evidence="1"/>
<dbReference type="EMBL" id="CP000922">
    <property type="protein sequence ID" value="ACJ32395.1"/>
    <property type="molecule type" value="Genomic_DNA"/>
</dbReference>
<dbReference type="RefSeq" id="WP_004888477.1">
    <property type="nucleotide sequence ID" value="NC_011567.1"/>
</dbReference>
<dbReference type="SMR" id="B7GFL8"/>
<dbReference type="STRING" id="491915.Aflv_0011"/>
<dbReference type="GeneID" id="7036198"/>
<dbReference type="KEGG" id="afl:Aflv_0011"/>
<dbReference type="eggNOG" id="COG0214">
    <property type="taxonomic scope" value="Bacteria"/>
</dbReference>
<dbReference type="HOGENOM" id="CLU_055352_1_0_9"/>
<dbReference type="UniPathway" id="UPA00245"/>
<dbReference type="Proteomes" id="UP000000742">
    <property type="component" value="Chromosome"/>
</dbReference>
<dbReference type="GO" id="GO:0036381">
    <property type="term" value="F:pyridoxal 5'-phosphate synthase (glutamine hydrolysing) activity"/>
    <property type="evidence" value="ECO:0007669"/>
    <property type="project" value="UniProtKB-UniRule"/>
</dbReference>
<dbReference type="GO" id="GO:0006520">
    <property type="term" value="P:amino acid metabolic process"/>
    <property type="evidence" value="ECO:0007669"/>
    <property type="project" value="TreeGrafter"/>
</dbReference>
<dbReference type="GO" id="GO:0042823">
    <property type="term" value="P:pyridoxal phosphate biosynthetic process"/>
    <property type="evidence" value="ECO:0007669"/>
    <property type="project" value="UniProtKB-UniRule"/>
</dbReference>
<dbReference type="GO" id="GO:0008615">
    <property type="term" value="P:pyridoxine biosynthetic process"/>
    <property type="evidence" value="ECO:0007669"/>
    <property type="project" value="TreeGrafter"/>
</dbReference>
<dbReference type="CDD" id="cd04727">
    <property type="entry name" value="pdxS"/>
    <property type="match status" value="1"/>
</dbReference>
<dbReference type="FunFam" id="3.20.20.70:FF:000001">
    <property type="entry name" value="Pyridoxine biosynthesis protein PDX1"/>
    <property type="match status" value="1"/>
</dbReference>
<dbReference type="Gene3D" id="3.20.20.70">
    <property type="entry name" value="Aldolase class I"/>
    <property type="match status" value="1"/>
</dbReference>
<dbReference type="HAMAP" id="MF_01824">
    <property type="entry name" value="PdxS"/>
    <property type="match status" value="1"/>
</dbReference>
<dbReference type="InterPro" id="IPR013785">
    <property type="entry name" value="Aldolase_TIM"/>
</dbReference>
<dbReference type="InterPro" id="IPR001852">
    <property type="entry name" value="PdxS/SNZ"/>
</dbReference>
<dbReference type="InterPro" id="IPR033755">
    <property type="entry name" value="PdxS/SNZ_N"/>
</dbReference>
<dbReference type="InterPro" id="IPR011060">
    <property type="entry name" value="RibuloseP-bd_barrel"/>
</dbReference>
<dbReference type="NCBIfam" id="NF003215">
    <property type="entry name" value="PRK04180.1"/>
    <property type="match status" value="1"/>
</dbReference>
<dbReference type="NCBIfam" id="TIGR00343">
    <property type="entry name" value="pyridoxal 5'-phosphate synthase lyase subunit PdxS"/>
    <property type="match status" value="1"/>
</dbReference>
<dbReference type="PANTHER" id="PTHR31829">
    <property type="entry name" value="PYRIDOXAL 5'-PHOSPHATE SYNTHASE SUBUNIT SNZ1-RELATED"/>
    <property type="match status" value="1"/>
</dbReference>
<dbReference type="PANTHER" id="PTHR31829:SF0">
    <property type="entry name" value="PYRIDOXAL 5'-PHOSPHATE SYNTHASE SUBUNIT SNZ1-RELATED"/>
    <property type="match status" value="1"/>
</dbReference>
<dbReference type="Pfam" id="PF01680">
    <property type="entry name" value="SOR_SNZ"/>
    <property type="match status" value="1"/>
</dbReference>
<dbReference type="PIRSF" id="PIRSF029271">
    <property type="entry name" value="Pdx1"/>
    <property type="match status" value="1"/>
</dbReference>
<dbReference type="SUPFAM" id="SSF51366">
    <property type="entry name" value="Ribulose-phoshate binding barrel"/>
    <property type="match status" value="1"/>
</dbReference>
<dbReference type="PROSITE" id="PS01235">
    <property type="entry name" value="PDXS_SNZ_1"/>
    <property type="match status" value="1"/>
</dbReference>
<dbReference type="PROSITE" id="PS51129">
    <property type="entry name" value="PDXS_SNZ_2"/>
    <property type="match status" value="1"/>
</dbReference>
<accession>B7GFL8</accession>
<reference key="1">
    <citation type="journal article" date="2008" name="Genome Biol.">
        <title>Encapsulated in silica: genome, proteome and physiology of the thermophilic bacterium Anoxybacillus flavithermus WK1.</title>
        <authorList>
            <person name="Saw J.H."/>
            <person name="Mountain B.W."/>
            <person name="Feng L."/>
            <person name="Omelchenko M.V."/>
            <person name="Hou S."/>
            <person name="Saito J.A."/>
            <person name="Stott M.B."/>
            <person name="Li D."/>
            <person name="Zhao G."/>
            <person name="Wu J."/>
            <person name="Galperin M.Y."/>
            <person name="Koonin E.V."/>
            <person name="Makarova K.S."/>
            <person name="Wolf Y.I."/>
            <person name="Rigden D.J."/>
            <person name="Dunfield P.F."/>
            <person name="Wang L."/>
            <person name="Alam M."/>
        </authorList>
    </citation>
    <scope>NUCLEOTIDE SEQUENCE [LARGE SCALE GENOMIC DNA]</scope>
    <source>
        <strain>DSM 21510 / WK1</strain>
    </source>
</reference>
<protein>
    <recommendedName>
        <fullName evidence="1">Pyridoxal 5'-phosphate synthase subunit PdxS</fullName>
        <shortName evidence="1">PLP synthase subunit PdxS</shortName>
        <ecNumber evidence="1">4.3.3.6</ecNumber>
    </recommendedName>
    <alternativeName>
        <fullName evidence="1">Pdx1</fullName>
    </alternativeName>
</protein>
<keyword id="KW-0456">Lyase</keyword>
<keyword id="KW-0663">Pyridoxal phosphate</keyword>
<keyword id="KW-0704">Schiff base</keyword>
<name>PDXS_ANOFW</name>
<sequence>MAVTGTERVKRGMAEMQKGGVIMDVVNAEQAKIAEAAGAVAVMALERVPADIRAAGGVARMADPTVIEEVMKAVSIPVMAKARIGHYVEARVLEALGVDYIDESEVLTPADEEFHIDKRQFTVPFVCGCRDLGEAARRIAEGASMLRTKGEPGTGNIVEAVRHMRKVNAQVRKVVSMSEDELMTEAKNLGAPFEVLLEIKRLGRLPVVNFAAGGVATPADAALMMHLGADGVFVGSGIFKSENPEKYARAIVEATTHYEDYELIAHLSKGLGGAMKGIDISSLLPEQRMQERGW</sequence>
<comment type="function">
    <text evidence="1">Catalyzes the formation of pyridoxal 5'-phosphate from ribose 5-phosphate (RBP), glyceraldehyde 3-phosphate (G3P) and ammonia. The ammonia is provided by the PdxT subunit. Can also use ribulose 5-phosphate and dihydroxyacetone phosphate as substrates, resulting from enzyme-catalyzed isomerization of RBP and G3P, respectively.</text>
</comment>
<comment type="catalytic activity">
    <reaction evidence="1">
        <text>aldehydo-D-ribose 5-phosphate + D-glyceraldehyde 3-phosphate + L-glutamine = pyridoxal 5'-phosphate + L-glutamate + phosphate + 3 H2O + H(+)</text>
        <dbReference type="Rhea" id="RHEA:31507"/>
        <dbReference type="ChEBI" id="CHEBI:15377"/>
        <dbReference type="ChEBI" id="CHEBI:15378"/>
        <dbReference type="ChEBI" id="CHEBI:29985"/>
        <dbReference type="ChEBI" id="CHEBI:43474"/>
        <dbReference type="ChEBI" id="CHEBI:58273"/>
        <dbReference type="ChEBI" id="CHEBI:58359"/>
        <dbReference type="ChEBI" id="CHEBI:59776"/>
        <dbReference type="ChEBI" id="CHEBI:597326"/>
        <dbReference type="EC" id="4.3.3.6"/>
    </reaction>
</comment>
<comment type="pathway">
    <text evidence="1">Cofactor biosynthesis; pyridoxal 5'-phosphate biosynthesis.</text>
</comment>
<comment type="subunit">
    <text evidence="1">In the presence of PdxT, forms a dodecamer of heterodimers.</text>
</comment>
<comment type="similarity">
    <text evidence="1">Belongs to the PdxS/SNZ family.</text>
</comment>
<feature type="chain" id="PRO_1000188203" description="Pyridoxal 5'-phosphate synthase subunit PdxS">
    <location>
        <begin position="1"/>
        <end position="294"/>
    </location>
</feature>
<feature type="active site" description="Schiff-base intermediate with D-ribose 5-phosphate" evidence="1">
    <location>
        <position position="81"/>
    </location>
</feature>
<feature type="binding site" evidence="1">
    <location>
        <position position="24"/>
    </location>
    <ligand>
        <name>D-ribose 5-phosphate</name>
        <dbReference type="ChEBI" id="CHEBI:78346"/>
    </ligand>
</feature>
<feature type="binding site" evidence="1">
    <location>
        <position position="153"/>
    </location>
    <ligand>
        <name>D-ribose 5-phosphate</name>
        <dbReference type="ChEBI" id="CHEBI:78346"/>
    </ligand>
</feature>
<feature type="binding site" evidence="1">
    <location>
        <position position="165"/>
    </location>
    <ligand>
        <name>D-glyceraldehyde 3-phosphate</name>
        <dbReference type="ChEBI" id="CHEBI:59776"/>
    </ligand>
</feature>
<feature type="binding site" evidence="1">
    <location>
        <position position="214"/>
    </location>
    <ligand>
        <name>D-ribose 5-phosphate</name>
        <dbReference type="ChEBI" id="CHEBI:78346"/>
    </ligand>
</feature>
<feature type="binding site" evidence="1">
    <location>
        <begin position="235"/>
        <end position="236"/>
    </location>
    <ligand>
        <name>D-ribose 5-phosphate</name>
        <dbReference type="ChEBI" id="CHEBI:78346"/>
    </ligand>
</feature>
<proteinExistence type="inferred from homology"/>
<evidence type="ECO:0000255" key="1">
    <source>
        <dbReference type="HAMAP-Rule" id="MF_01824"/>
    </source>
</evidence>
<gene>
    <name evidence="1" type="primary">pdxS</name>
    <name type="ordered locus">Aflv_0011</name>
</gene>
<organism>
    <name type="scientific">Anoxybacillus flavithermus (strain DSM 21510 / WK1)</name>
    <dbReference type="NCBI Taxonomy" id="491915"/>
    <lineage>
        <taxon>Bacteria</taxon>
        <taxon>Bacillati</taxon>
        <taxon>Bacillota</taxon>
        <taxon>Bacilli</taxon>
        <taxon>Bacillales</taxon>
        <taxon>Anoxybacillaceae</taxon>
        <taxon>Anoxybacillus</taxon>
    </lineage>
</organism>